<reference key="1">
    <citation type="submission" date="2005-03" db="EMBL/GenBank/DDBJ databases">
        <title>Brevibacillus brevis strain 47, complete genome.</title>
        <authorList>
            <person name="Hosoyama A."/>
            <person name="Yamada R."/>
            <person name="Hongo Y."/>
            <person name="Terui Y."/>
            <person name="Ankai A."/>
            <person name="Masuyama W."/>
            <person name="Sekiguchi M."/>
            <person name="Takeda T."/>
            <person name="Asano K."/>
            <person name="Ohji S."/>
            <person name="Ichikawa N."/>
            <person name="Narita S."/>
            <person name="Aoki N."/>
            <person name="Miura H."/>
            <person name="Matsushita S."/>
            <person name="Sekigawa T."/>
            <person name="Yamagata H."/>
            <person name="Yoshikawa H."/>
            <person name="Udaka S."/>
            <person name="Tanikawa S."/>
            <person name="Fujita N."/>
        </authorList>
    </citation>
    <scope>NUCLEOTIDE SEQUENCE [LARGE SCALE GENOMIC DNA]</scope>
    <source>
        <strain>47 / JCM 6285 / NBRC 100599</strain>
    </source>
</reference>
<dbReference type="EC" id="6.3.4.4" evidence="1"/>
<dbReference type="EMBL" id="AP008955">
    <property type="protein sequence ID" value="BAH46894.1"/>
    <property type="molecule type" value="Genomic_DNA"/>
</dbReference>
<dbReference type="RefSeq" id="WP_015894077.1">
    <property type="nucleotide sequence ID" value="NC_012491.1"/>
</dbReference>
<dbReference type="SMR" id="C0ZA40"/>
<dbReference type="STRING" id="358681.BBR47_59170"/>
<dbReference type="KEGG" id="bbe:BBR47_59170"/>
<dbReference type="eggNOG" id="COG0104">
    <property type="taxonomic scope" value="Bacteria"/>
</dbReference>
<dbReference type="HOGENOM" id="CLU_029848_0_0_9"/>
<dbReference type="UniPathway" id="UPA00075">
    <property type="reaction ID" value="UER00335"/>
</dbReference>
<dbReference type="Proteomes" id="UP000001877">
    <property type="component" value="Chromosome"/>
</dbReference>
<dbReference type="GO" id="GO:0005737">
    <property type="term" value="C:cytoplasm"/>
    <property type="evidence" value="ECO:0007669"/>
    <property type="project" value="UniProtKB-SubCell"/>
</dbReference>
<dbReference type="GO" id="GO:0004019">
    <property type="term" value="F:adenylosuccinate synthase activity"/>
    <property type="evidence" value="ECO:0007669"/>
    <property type="project" value="UniProtKB-UniRule"/>
</dbReference>
<dbReference type="GO" id="GO:0005525">
    <property type="term" value="F:GTP binding"/>
    <property type="evidence" value="ECO:0007669"/>
    <property type="project" value="UniProtKB-UniRule"/>
</dbReference>
<dbReference type="GO" id="GO:0000287">
    <property type="term" value="F:magnesium ion binding"/>
    <property type="evidence" value="ECO:0007669"/>
    <property type="project" value="UniProtKB-UniRule"/>
</dbReference>
<dbReference type="GO" id="GO:0044208">
    <property type="term" value="P:'de novo' AMP biosynthetic process"/>
    <property type="evidence" value="ECO:0007669"/>
    <property type="project" value="UniProtKB-UniRule"/>
</dbReference>
<dbReference type="GO" id="GO:0046040">
    <property type="term" value="P:IMP metabolic process"/>
    <property type="evidence" value="ECO:0007669"/>
    <property type="project" value="TreeGrafter"/>
</dbReference>
<dbReference type="CDD" id="cd03108">
    <property type="entry name" value="AdSS"/>
    <property type="match status" value="1"/>
</dbReference>
<dbReference type="FunFam" id="1.10.300.10:FF:000001">
    <property type="entry name" value="Adenylosuccinate synthetase"/>
    <property type="match status" value="1"/>
</dbReference>
<dbReference type="FunFam" id="3.90.170.10:FF:000001">
    <property type="entry name" value="Adenylosuccinate synthetase"/>
    <property type="match status" value="1"/>
</dbReference>
<dbReference type="Gene3D" id="3.40.440.10">
    <property type="entry name" value="Adenylosuccinate Synthetase, subunit A, domain 1"/>
    <property type="match status" value="1"/>
</dbReference>
<dbReference type="Gene3D" id="1.10.300.10">
    <property type="entry name" value="Adenylosuccinate Synthetase, subunit A, domain 2"/>
    <property type="match status" value="1"/>
</dbReference>
<dbReference type="Gene3D" id="3.90.170.10">
    <property type="entry name" value="Adenylosuccinate Synthetase, subunit A, domain 3"/>
    <property type="match status" value="1"/>
</dbReference>
<dbReference type="HAMAP" id="MF_00011">
    <property type="entry name" value="Adenylosucc_synth"/>
    <property type="match status" value="1"/>
</dbReference>
<dbReference type="InterPro" id="IPR018220">
    <property type="entry name" value="Adenylosuccin_syn_GTP-bd"/>
</dbReference>
<dbReference type="InterPro" id="IPR033128">
    <property type="entry name" value="Adenylosuccin_syn_Lys_AS"/>
</dbReference>
<dbReference type="InterPro" id="IPR042109">
    <property type="entry name" value="Adenylosuccinate_synth_dom1"/>
</dbReference>
<dbReference type="InterPro" id="IPR042110">
    <property type="entry name" value="Adenylosuccinate_synth_dom2"/>
</dbReference>
<dbReference type="InterPro" id="IPR042111">
    <property type="entry name" value="Adenylosuccinate_synth_dom3"/>
</dbReference>
<dbReference type="InterPro" id="IPR001114">
    <property type="entry name" value="Adenylosuccinate_synthetase"/>
</dbReference>
<dbReference type="InterPro" id="IPR027417">
    <property type="entry name" value="P-loop_NTPase"/>
</dbReference>
<dbReference type="NCBIfam" id="NF002223">
    <property type="entry name" value="PRK01117.1"/>
    <property type="match status" value="1"/>
</dbReference>
<dbReference type="NCBIfam" id="TIGR00184">
    <property type="entry name" value="purA"/>
    <property type="match status" value="1"/>
</dbReference>
<dbReference type="PANTHER" id="PTHR11846">
    <property type="entry name" value="ADENYLOSUCCINATE SYNTHETASE"/>
    <property type="match status" value="1"/>
</dbReference>
<dbReference type="PANTHER" id="PTHR11846:SF0">
    <property type="entry name" value="ADENYLOSUCCINATE SYNTHETASE"/>
    <property type="match status" value="1"/>
</dbReference>
<dbReference type="Pfam" id="PF00709">
    <property type="entry name" value="Adenylsucc_synt"/>
    <property type="match status" value="1"/>
</dbReference>
<dbReference type="SMART" id="SM00788">
    <property type="entry name" value="Adenylsucc_synt"/>
    <property type="match status" value="1"/>
</dbReference>
<dbReference type="SUPFAM" id="SSF52540">
    <property type="entry name" value="P-loop containing nucleoside triphosphate hydrolases"/>
    <property type="match status" value="1"/>
</dbReference>
<dbReference type="PROSITE" id="PS01266">
    <property type="entry name" value="ADENYLOSUCCIN_SYN_1"/>
    <property type="match status" value="1"/>
</dbReference>
<dbReference type="PROSITE" id="PS00513">
    <property type="entry name" value="ADENYLOSUCCIN_SYN_2"/>
    <property type="match status" value="1"/>
</dbReference>
<protein>
    <recommendedName>
        <fullName evidence="1">Adenylosuccinate synthetase</fullName>
        <shortName evidence="1">AMPSase</shortName>
        <shortName evidence="1">AdSS</shortName>
        <ecNumber evidence="1">6.3.4.4</ecNumber>
    </recommendedName>
    <alternativeName>
        <fullName evidence="1">IMP--aspartate ligase</fullName>
    </alternativeName>
</protein>
<name>PURA_BREBN</name>
<feature type="chain" id="PRO_1000116456" description="Adenylosuccinate synthetase">
    <location>
        <begin position="1"/>
        <end position="428"/>
    </location>
</feature>
<feature type="active site" description="Proton acceptor" evidence="1">
    <location>
        <position position="13"/>
    </location>
</feature>
<feature type="active site" description="Proton donor" evidence="1">
    <location>
        <position position="41"/>
    </location>
</feature>
<feature type="binding site" evidence="1">
    <location>
        <begin position="12"/>
        <end position="18"/>
    </location>
    <ligand>
        <name>GTP</name>
        <dbReference type="ChEBI" id="CHEBI:37565"/>
    </ligand>
</feature>
<feature type="binding site" description="in other chain" evidence="1">
    <location>
        <begin position="13"/>
        <end position="16"/>
    </location>
    <ligand>
        <name>IMP</name>
        <dbReference type="ChEBI" id="CHEBI:58053"/>
        <note>ligand shared between dimeric partners</note>
    </ligand>
</feature>
<feature type="binding site" evidence="1">
    <location>
        <position position="13"/>
    </location>
    <ligand>
        <name>Mg(2+)</name>
        <dbReference type="ChEBI" id="CHEBI:18420"/>
    </ligand>
</feature>
<feature type="binding site" description="in other chain" evidence="1">
    <location>
        <begin position="38"/>
        <end position="41"/>
    </location>
    <ligand>
        <name>IMP</name>
        <dbReference type="ChEBI" id="CHEBI:58053"/>
        <note>ligand shared between dimeric partners</note>
    </ligand>
</feature>
<feature type="binding site" evidence="1">
    <location>
        <begin position="40"/>
        <end position="42"/>
    </location>
    <ligand>
        <name>GTP</name>
        <dbReference type="ChEBI" id="CHEBI:37565"/>
    </ligand>
</feature>
<feature type="binding site" evidence="1">
    <location>
        <position position="40"/>
    </location>
    <ligand>
        <name>Mg(2+)</name>
        <dbReference type="ChEBI" id="CHEBI:18420"/>
    </ligand>
</feature>
<feature type="binding site" description="in other chain" evidence="1">
    <location>
        <position position="128"/>
    </location>
    <ligand>
        <name>IMP</name>
        <dbReference type="ChEBI" id="CHEBI:58053"/>
        <note>ligand shared between dimeric partners</note>
    </ligand>
</feature>
<feature type="binding site" evidence="1">
    <location>
        <position position="142"/>
    </location>
    <ligand>
        <name>IMP</name>
        <dbReference type="ChEBI" id="CHEBI:58053"/>
        <note>ligand shared between dimeric partners</note>
    </ligand>
</feature>
<feature type="binding site" description="in other chain" evidence="1">
    <location>
        <position position="223"/>
    </location>
    <ligand>
        <name>IMP</name>
        <dbReference type="ChEBI" id="CHEBI:58053"/>
        <note>ligand shared between dimeric partners</note>
    </ligand>
</feature>
<feature type="binding site" description="in other chain" evidence="1">
    <location>
        <position position="238"/>
    </location>
    <ligand>
        <name>IMP</name>
        <dbReference type="ChEBI" id="CHEBI:58053"/>
        <note>ligand shared between dimeric partners</note>
    </ligand>
</feature>
<feature type="binding site" evidence="1">
    <location>
        <begin position="298"/>
        <end position="304"/>
    </location>
    <ligand>
        <name>substrate</name>
    </ligand>
</feature>
<feature type="binding site" description="in other chain" evidence="1">
    <location>
        <position position="302"/>
    </location>
    <ligand>
        <name>IMP</name>
        <dbReference type="ChEBI" id="CHEBI:58053"/>
        <note>ligand shared between dimeric partners</note>
    </ligand>
</feature>
<feature type="binding site" evidence="1">
    <location>
        <position position="304"/>
    </location>
    <ligand>
        <name>GTP</name>
        <dbReference type="ChEBI" id="CHEBI:37565"/>
    </ligand>
</feature>
<feature type="binding site" evidence="1">
    <location>
        <begin position="330"/>
        <end position="332"/>
    </location>
    <ligand>
        <name>GTP</name>
        <dbReference type="ChEBI" id="CHEBI:37565"/>
    </ligand>
</feature>
<feature type="binding site" evidence="1">
    <location>
        <begin position="412"/>
        <end position="414"/>
    </location>
    <ligand>
        <name>GTP</name>
        <dbReference type="ChEBI" id="CHEBI:37565"/>
    </ligand>
</feature>
<comment type="function">
    <text evidence="1">Plays an important role in the de novo pathway of purine nucleotide biosynthesis. Catalyzes the first committed step in the biosynthesis of AMP from IMP.</text>
</comment>
<comment type="catalytic activity">
    <reaction evidence="1">
        <text>IMP + L-aspartate + GTP = N(6)-(1,2-dicarboxyethyl)-AMP + GDP + phosphate + 2 H(+)</text>
        <dbReference type="Rhea" id="RHEA:15753"/>
        <dbReference type="ChEBI" id="CHEBI:15378"/>
        <dbReference type="ChEBI" id="CHEBI:29991"/>
        <dbReference type="ChEBI" id="CHEBI:37565"/>
        <dbReference type="ChEBI" id="CHEBI:43474"/>
        <dbReference type="ChEBI" id="CHEBI:57567"/>
        <dbReference type="ChEBI" id="CHEBI:58053"/>
        <dbReference type="ChEBI" id="CHEBI:58189"/>
        <dbReference type="EC" id="6.3.4.4"/>
    </reaction>
</comment>
<comment type="cofactor">
    <cofactor evidence="1">
        <name>Mg(2+)</name>
        <dbReference type="ChEBI" id="CHEBI:18420"/>
    </cofactor>
    <text evidence="1">Binds 1 Mg(2+) ion per subunit.</text>
</comment>
<comment type="pathway">
    <text evidence="1">Purine metabolism; AMP biosynthesis via de novo pathway; AMP from IMP: step 1/2.</text>
</comment>
<comment type="subunit">
    <text evidence="1">Homodimer.</text>
</comment>
<comment type="subcellular location">
    <subcellularLocation>
        <location evidence="1">Cytoplasm</location>
    </subcellularLocation>
</comment>
<comment type="similarity">
    <text evidence="1">Belongs to the adenylosuccinate synthetase family.</text>
</comment>
<gene>
    <name evidence="1" type="primary">purA</name>
    <name type="ordered locus">BBR47_59170</name>
</gene>
<proteinExistence type="inferred from homology"/>
<sequence length="428" mass="46990">MSTVVVVGTQWGDEGKGKITDYLAESAEVVARYQGGNNAGHTIIFDGNKYKLHLIPSGIFYSDKTCVIGNGMVIDPKALVKELEYIHSFGFSTSNLKISDRAHVILPYHIKLDGVEEDSRGANKIGTTRKGIGPAYMDKAARIGIRIADLLDRDEFARKLERNLAEKNMLLEKLYNTTGFELKEILDEYLALAEIIRPYVTDTSVVLNDSIDSGNRVLFEGAQGVLLDIDQGTYPYVTSSNPIAGGVTIGSGVGPTKIHQVIGVAKAYTTRVGDGPFLTELNDATGDHIREVGFEYGTTTGRPRRVGWFDSVVVRHARRVSGITGLAITKLDTLSGIETLRICTAYKYNGEIIESFPANLNLLAKCEPVYEELPGWTEDITGIRNLNDLPENARHYIERITQLTGIPMSIFSVGPDREQTVVVRGIYG</sequence>
<accession>C0ZA40</accession>
<organism>
    <name type="scientific">Brevibacillus brevis (strain 47 / JCM 6285 / NBRC 100599)</name>
    <dbReference type="NCBI Taxonomy" id="358681"/>
    <lineage>
        <taxon>Bacteria</taxon>
        <taxon>Bacillati</taxon>
        <taxon>Bacillota</taxon>
        <taxon>Bacilli</taxon>
        <taxon>Bacillales</taxon>
        <taxon>Paenibacillaceae</taxon>
        <taxon>Brevibacillus</taxon>
    </lineage>
</organism>
<evidence type="ECO:0000255" key="1">
    <source>
        <dbReference type="HAMAP-Rule" id="MF_00011"/>
    </source>
</evidence>
<keyword id="KW-0963">Cytoplasm</keyword>
<keyword id="KW-0342">GTP-binding</keyword>
<keyword id="KW-0436">Ligase</keyword>
<keyword id="KW-0460">Magnesium</keyword>
<keyword id="KW-0479">Metal-binding</keyword>
<keyword id="KW-0547">Nucleotide-binding</keyword>
<keyword id="KW-0658">Purine biosynthesis</keyword>
<keyword id="KW-1185">Reference proteome</keyword>